<name>PDXS_CHLAA</name>
<reference key="1">
    <citation type="journal article" date="2011" name="BMC Genomics">
        <title>Complete genome sequence of the filamentous anoxygenic phototrophic bacterium Chloroflexus aurantiacus.</title>
        <authorList>
            <person name="Tang K.H."/>
            <person name="Barry K."/>
            <person name="Chertkov O."/>
            <person name="Dalin E."/>
            <person name="Han C.S."/>
            <person name="Hauser L.J."/>
            <person name="Honchak B.M."/>
            <person name="Karbach L.E."/>
            <person name="Land M.L."/>
            <person name="Lapidus A."/>
            <person name="Larimer F.W."/>
            <person name="Mikhailova N."/>
            <person name="Pitluck S."/>
            <person name="Pierson B.K."/>
            <person name="Blankenship R.E."/>
        </authorList>
    </citation>
    <scope>NUCLEOTIDE SEQUENCE [LARGE SCALE GENOMIC DNA]</scope>
    <source>
        <strain>ATCC 29366 / DSM 635 / J-10-fl</strain>
    </source>
</reference>
<organism>
    <name type="scientific">Chloroflexus aurantiacus (strain ATCC 29366 / DSM 635 / J-10-fl)</name>
    <dbReference type="NCBI Taxonomy" id="324602"/>
    <lineage>
        <taxon>Bacteria</taxon>
        <taxon>Bacillati</taxon>
        <taxon>Chloroflexota</taxon>
        <taxon>Chloroflexia</taxon>
        <taxon>Chloroflexales</taxon>
        <taxon>Chloroflexineae</taxon>
        <taxon>Chloroflexaceae</taxon>
        <taxon>Chloroflexus</taxon>
    </lineage>
</organism>
<keyword id="KW-0456">Lyase</keyword>
<keyword id="KW-0663">Pyridoxal phosphate</keyword>
<keyword id="KW-1185">Reference proteome</keyword>
<keyword id="KW-0704">Schiff base</keyword>
<proteinExistence type="inferred from homology"/>
<protein>
    <recommendedName>
        <fullName evidence="1">Pyridoxal 5'-phosphate synthase subunit PdxS</fullName>
        <shortName evidence="1">PLP synthase subunit PdxS</shortName>
        <ecNumber evidence="1">4.3.3.6</ecNumber>
    </recommendedName>
    <alternativeName>
        <fullName evidence="1">Pdx1</fullName>
    </alternativeName>
</protein>
<sequence length="293" mass="31548">MEKSTWTTKVGLAQMLKGGVIMDVVTPEQARIAEEAGAVAVMALERVPADIRAQGGVARMSDPELILAIKQAVTIPVMAKARIGHFVEAQVLEAIGVDYIDESEVLTPADEEHHINKHKFRVPFVCGCRNLGEALRRVAEGAAMLRTKGEAGTGNVVEAVRHARAVYSEIRRLQSMNEDELFTYAKQIQAPYELVKQVATEGKLPVVNFAAGGIATPADAALLMQLGVDGIFVGSGIFKSGDPVKRARAIVEATTHYNDPEIIAEVSKGLGEAMVGINIDQIPADQLMARRGW</sequence>
<comment type="function">
    <text evidence="1">Catalyzes the formation of pyridoxal 5'-phosphate from ribose 5-phosphate (RBP), glyceraldehyde 3-phosphate (G3P) and ammonia. The ammonia is provided by the PdxT subunit. Can also use ribulose 5-phosphate and dihydroxyacetone phosphate as substrates, resulting from enzyme-catalyzed isomerization of RBP and G3P, respectively.</text>
</comment>
<comment type="catalytic activity">
    <reaction evidence="1">
        <text>aldehydo-D-ribose 5-phosphate + D-glyceraldehyde 3-phosphate + L-glutamine = pyridoxal 5'-phosphate + L-glutamate + phosphate + 3 H2O + H(+)</text>
        <dbReference type="Rhea" id="RHEA:31507"/>
        <dbReference type="ChEBI" id="CHEBI:15377"/>
        <dbReference type="ChEBI" id="CHEBI:15378"/>
        <dbReference type="ChEBI" id="CHEBI:29985"/>
        <dbReference type="ChEBI" id="CHEBI:43474"/>
        <dbReference type="ChEBI" id="CHEBI:58273"/>
        <dbReference type="ChEBI" id="CHEBI:58359"/>
        <dbReference type="ChEBI" id="CHEBI:59776"/>
        <dbReference type="ChEBI" id="CHEBI:597326"/>
        <dbReference type="EC" id="4.3.3.6"/>
    </reaction>
</comment>
<comment type="pathway">
    <text evidence="1">Cofactor biosynthesis; pyridoxal 5'-phosphate biosynthesis.</text>
</comment>
<comment type="subunit">
    <text evidence="1">In the presence of PdxT, forms a dodecamer of heterodimers.</text>
</comment>
<comment type="similarity">
    <text evidence="1">Belongs to the PdxS/SNZ family.</text>
</comment>
<dbReference type="EC" id="4.3.3.6" evidence="1"/>
<dbReference type="EMBL" id="CP000909">
    <property type="protein sequence ID" value="ABY35439.1"/>
    <property type="molecule type" value="Genomic_DNA"/>
</dbReference>
<dbReference type="RefSeq" id="WP_012258093.1">
    <property type="nucleotide sequence ID" value="NC_010175.1"/>
</dbReference>
<dbReference type="RefSeq" id="YP_001635828.1">
    <property type="nucleotide sequence ID" value="NC_010175.1"/>
</dbReference>
<dbReference type="SMR" id="A9WFT9"/>
<dbReference type="FunCoup" id="A9WFT9">
    <property type="interactions" value="255"/>
</dbReference>
<dbReference type="STRING" id="324602.Caur_2230"/>
<dbReference type="EnsemblBacteria" id="ABY35439">
    <property type="protein sequence ID" value="ABY35439"/>
    <property type="gene ID" value="Caur_2230"/>
</dbReference>
<dbReference type="KEGG" id="cau:Caur_2230"/>
<dbReference type="PATRIC" id="fig|324602.8.peg.2527"/>
<dbReference type="eggNOG" id="COG0214">
    <property type="taxonomic scope" value="Bacteria"/>
</dbReference>
<dbReference type="HOGENOM" id="CLU_055352_1_0_0"/>
<dbReference type="InParanoid" id="A9WFT9"/>
<dbReference type="UniPathway" id="UPA00245"/>
<dbReference type="Proteomes" id="UP000002008">
    <property type="component" value="Chromosome"/>
</dbReference>
<dbReference type="GO" id="GO:0016843">
    <property type="term" value="F:amine-lyase activity"/>
    <property type="evidence" value="ECO:0000318"/>
    <property type="project" value="GO_Central"/>
</dbReference>
<dbReference type="GO" id="GO:0036381">
    <property type="term" value="F:pyridoxal 5'-phosphate synthase (glutamine hydrolysing) activity"/>
    <property type="evidence" value="ECO:0007669"/>
    <property type="project" value="UniProtKB-UniRule"/>
</dbReference>
<dbReference type="GO" id="GO:0006520">
    <property type="term" value="P:amino acid metabolic process"/>
    <property type="evidence" value="ECO:0000318"/>
    <property type="project" value="GO_Central"/>
</dbReference>
<dbReference type="GO" id="GO:0042823">
    <property type="term" value="P:pyridoxal phosphate biosynthetic process"/>
    <property type="evidence" value="ECO:0000318"/>
    <property type="project" value="GO_Central"/>
</dbReference>
<dbReference type="GO" id="GO:0008615">
    <property type="term" value="P:pyridoxine biosynthetic process"/>
    <property type="evidence" value="ECO:0000318"/>
    <property type="project" value="GO_Central"/>
</dbReference>
<dbReference type="CDD" id="cd04727">
    <property type="entry name" value="pdxS"/>
    <property type="match status" value="1"/>
</dbReference>
<dbReference type="FunFam" id="3.20.20.70:FF:000001">
    <property type="entry name" value="Pyridoxine biosynthesis protein PDX1"/>
    <property type="match status" value="1"/>
</dbReference>
<dbReference type="Gene3D" id="3.20.20.70">
    <property type="entry name" value="Aldolase class I"/>
    <property type="match status" value="1"/>
</dbReference>
<dbReference type="HAMAP" id="MF_01824">
    <property type="entry name" value="PdxS"/>
    <property type="match status" value="1"/>
</dbReference>
<dbReference type="InterPro" id="IPR013785">
    <property type="entry name" value="Aldolase_TIM"/>
</dbReference>
<dbReference type="InterPro" id="IPR001852">
    <property type="entry name" value="PdxS/SNZ"/>
</dbReference>
<dbReference type="InterPro" id="IPR033755">
    <property type="entry name" value="PdxS/SNZ_N"/>
</dbReference>
<dbReference type="InterPro" id="IPR011060">
    <property type="entry name" value="RibuloseP-bd_barrel"/>
</dbReference>
<dbReference type="NCBIfam" id="NF003215">
    <property type="entry name" value="PRK04180.1"/>
    <property type="match status" value="1"/>
</dbReference>
<dbReference type="NCBIfam" id="TIGR00343">
    <property type="entry name" value="pyridoxal 5'-phosphate synthase lyase subunit PdxS"/>
    <property type="match status" value="1"/>
</dbReference>
<dbReference type="PANTHER" id="PTHR31829">
    <property type="entry name" value="PYRIDOXAL 5'-PHOSPHATE SYNTHASE SUBUNIT SNZ1-RELATED"/>
    <property type="match status" value="1"/>
</dbReference>
<dbReference type="PANTHER" id="PTHR31829:SF0">
    <property type="entry name" value="PYRIDOXAL 5'-PHOSPHATE SYNTHASE SUBUNIT SNZ1-RELATED"/>
    <property type="match status" value="1"/>
</dbReference>
<dbReference type="Pfam" id="PF01680">
    <property type="entry name" value="SOR_SNZ"/>
    <property type="match status" value="1"/>
</dbReference>
<dbReference type="PIRSF" id="PIRSF029271">
    <property type="entry name" value="Pdx1"/>
    <property type="match status" value="1"/>
</dbReference>
<dbReference type="SUPFAM" id="SSF51366">
    <property type="entry name" value="Ribulose-phoshate binding barrel"/>
    <property type="match status" value="1"/>
</dbReference>
<dbReference type="PROSITE" id="PS01235">
    <property type="entry name" value="PDXS_SNZ_1"/>
    <property type="match status" value="1"/>
</dbReference>
<dbReference type="PROSITE" id="PS51129">
    <property type="entry name" value="PDXS_SNZ_2"/>
    <property type="match status" value="1"/>
</dbReference>
<accession>A9WFT9</accession>
<evidence type="ECO:0000255" key="1">
    <source>
        <dbReference type="HAMAP-Rule" id="MF_01824"/>
    </source>
</evidence>
<gene>
    <name evidence="1" type="primary">pdxS</name>
    <name type="ordered locus">Caur_2230</name>
</gene>
<feature type="chain" id="PRO_1000088405" description="Pyridoxal 5'-phosphate synthase subunit PdxS">
    <location>
        <begin position="1"/>
        <end position="293"/>
    </location>
</feature>
<feature type="active site" description="Schiff-base intermediate with D-ribose 5-phosphate" evidence="1">
    <location>
        <position position="80"/>
    </location>
</feature>
<feature type="binding site" evidence="1">
    <location>
        <position position="23"/>
    </location>
    <ligand>
        <name>D-ribose 5-phosphate</name>
        <dbReference type="ChEBI" id="CHEBI:78346"/>
    </ligand>
</feature>
<feature type="binding site" evidence="1">
    <location>
        <position position="152"/>
    </location>
    <ligand>
        <name>D-ribose 5-phosphate</name>
        <dbReference type="ChEBI" id="CHEBI:78346"/>
    </ligand>
</feature>
<feature type="binding site" evidence="1">
    <location>
        <position position="164"/>
    </location>
    <ligand>
        <name>D-glyceraldehyde 3-phosphate</name>
        <dbReference type="ChEBI" id="CHEBI:59776"/>
    </ligand>
</feature>
<feature type="binding site" evidence="1">
    <location>
        <position position="213"/>
    </location>
    <ligand>
        <name>D-ribose 5-phosphate</name>
        <dbReference type="ChEBI" id="CHEBI:78346"/>
    </ligand>
</feature>
<feature type="binding site" evidence="1">
    <location>
        <begin position="234"/>
        <end position="235"/>
    </location>
    <ligand>
        <name>D-ribose 5-phosphate</name>
        <dbReference type="ChEBI" id="CHEBI:78346"/>
    </ligand>
</feature>